<evidence type="ECO:0000250" key="1"/>
<evidence type="ECO:0000305" key="2"/>
<proteinExistence type="inferred from homology"/>
<keyword id="KW-0975">Bacterial flagellum</keyword>
<keyword id="KW-0964">Secreted</keyword>
<name>FLA1_BARBA</name>
<dbReference type="EMBL" id="L20677">
    <property type="protein sequence ID" value="AAA22899.1"/>
    <property type="molecule type" value="Genomic_DNA"/>
</dbReference>
<dbReference type="SMR" id="P35633"/>
<dbReference type="GO" id="GO:0009288">
    <property type="term" value="C:bacterial-type flagellum"/>
    <property type="evidence" value="ECO:0007669"/>
    <property type="project" value="UniProtKB-SubCell"/>
</dbReference>
<dbReference type="GO" id="GO:0005576">
    <property type="term" value="C:extracellular region"/>
    <property type="evidence" value="ECO:0007669"/>
    <property type="project" value="UniProtKB-SubCell"/>
</dbReference>
<dbReference type="GO" id="GO:0005198">
    <property type="term" value="F:structural molecule activity"/>
    <property type="evidence" value="ECO:0007669"/>
    <property type="project" value="InterPro"/>
</dbReference>
<dbReference type="Gene3D" id="1.20.1330.10">
    <property type="entry name" value="f41 fragment of flagellin, N-terminal domain"/>
    <property type="match status" value="2"/>
</dbReference>
<dbReference type="InterPro" id="IPR001492">
    <property type="entry name" value="Flagellin"/>
</dbReference>
<dbReference type="InterPro" id="IPR046358">
    <property type="entry name" value="Flagellin_C"/>
</dbReference>
<dbReference type="InterPro" id="IPR001029">
    <property type="entry name" value="Flagellin_N"/>
</dbReference>
<dbReference type="PANTHER" id="PTHR42792">
    <property type="entry name" value="FLAGELLIN"/>
    <property type="match status" value="1"/>
</dbReference>
<dbReference type="PANTHER" id="PTHR42792:SF2">
    <property type="entry name" value="FLAGELLIN"/>
    <property type="match status" value="1"/>
</dbReference>
<dbReference type="Pfam" id="PF00700">
    <property type="entry name" value="Flagellin_C"/>
    <property type="match status" value="1"/>
</dbReference>
<dbReference type="Pfam" id="PF00669">
    <property type="entry name" value="Flagellin_N"/>
    <property type="match status" value="1"/>
</dbReference>
<dbReference type="SUPFAM" id="SSF64518">
    <property type="entry name" value="Phase 1 flagellin"/>
    <property type="match status" value="1"/>
</dbReference>
<comment type="function">
    <text>Flagellin is the subunit protein which polymerizes to form the filaments of bacterial flagella. Flagella are an important component in the invasiveness of B.bacilliformis.</text>
</comment>
<comment type="subcellular location">
    <subcellularLocation>
        <location>Secreted</location>
    </subcellularLocation>
    <subcellularLocation>
        <location>Bacterial flagellum</location>
    </subcellularLocation>
</comment>
<comment type="similarity">
    <text evidence="2">Belongs to the bacterial flagellin family.</text>
</comment>
<accession>P35633</accession>
<reference key="1">
    <citation type="submission" date="1993-07" db="EMBL/GenBank/DDBJ databases">
        <title>Isolation and molecular cloning of Bartonella bacilliformis flagellin gene.</title>
        <authorList>
            <person name="Arevalo-Jimenez J.I."/>
            <person name="Williams M."/>
            <person name="Marks K."/>
            <person name="Ihler G.M."/>
        </authorList>
    </citation>
    <scope>NUCLEOTIDE SEQUENCE [GENOMIC DNA]</scope>
</reference>
<feature type="initiator methionine" description="Removed" evidence="1">
    <location>
        <position position="1"/>
    </location>
</feature>
<feature type="chain" id="PRO_0000182587" description="Flagellin">
    <location>
        <begin position="2"/>
        <end position="375"/>
    </location>
</feature>
<sequence length="375" mass="39846">MGSSILTNRSAMTALQTLRNIDNNLDKSKDRISTGLRIGSASDNTAYWSISSMMKHDSNTMSAVVDAINLGREQVNVAATAVNLTKESLDDIQKSMVSAREKSDDDIMKIQDSIKGNMQNISNAIQSAAFGGKNILSNGGEKVGIAAGYRREGSAVYVDMIEVGGAELNFGVMGPDGTIDMTQGILKGVFGKSDKDIDAGIKTFTEAADKQKGLEDALAKAEAAVAANPNDEAAKTALEEAKKAVEDNKEDWTKAQSDFKVVADSMTLNDFVQMQGVGGLPSVAQSIILNSVQKTVRHAVDVTLTAGSKIGSAVNQVDSQLNFVKRLLDNIEAGIGALVDADMNAESAKLSALQVQQQLGIPRLFLLQIRAARIF</sequence>
<protein>
    <recommendedName>
        <fullName>Flagellin</fullName>
    </recommendedName>
</protein>
<organism>
    <name type="scientific">Bartonella bacilliformis</name>
    <dbReference type="NCBI Taxonomy" id="774"/>
    <lineage>
        <taxon>Bacteria</taxon>
        <taxon>Pseudomonadati</taxon>
        <taxon>Pseudomonadota</taxon>
        <taxon>Alphaproteobacteria</taxon>
        <taxon>Hyphomicrobiales</taxon>
        <taxon>Bartonellaceae</taxon>
        <taxon>Bartonella</taxon>
    </lineage>
</organism>